<reference key="1">
    <citation type="submission" date="2003-10" db="EMBL/GenBank/DDBJ databases">
        <title>The complete genome sequence of the alkaliphilic Bacillus clausii KSM-K16.</title>
        <authorList>
            <person name="Takaki Y."/>
            <person name="Kageyama Y."/>
            <person name="Shimamura S."/>
            <person name="Suzuki H."/>
            <person name="Nishi S."/>
            <person name="Hatada Y."/>
            <person name="Kawai S."/>
            <person name="Ito S."/>
            <person name="Horikoshi K."/>
        </authorList>
    </citation>
    <scope>NUCLEOTIDE SEQUENCE [LARGE SCALE GENOMIC DNA]</scope>
    <source>
        <strain>KSM-K16</strain>
    </source>
</reference>
<organism>
    <name type="scientific">Shouchella clausii (strain KSM-K16)</name>
    <name type="common">Alkalihalobacillus clausii</name>
    <dbReference type="NCBI Taxonomy" id="66692"/>
    <lineage>
        <taxon>Bacteria</taxon>
        <taxon>Bacillati</taxon>
        <taxon>Bacillota</taxon>
        <taxon>Bacilli</taxon>
        <taxon>Bacillales</taxon>
        <taxon>Bacillaceae</taxon>
        <taxon>Shouchella</taxon>
    </lineage>
</organism>
<protein>
    <recommendedName>
        <fullName evidence="2">Histidinol dehydrogenase homolog</fullName>
        <ecNumber evidence="2">1.1.-.-</ecNumber>
    </recommendedName>
</protein>
<evidence type="ECO:0000250" key="1">
    <source>
        <dbReference type="UniProtKB" id="P06988"/>
    </source>
</evidence>
<evidence type="ECO:0000305" key="2"/>
<sequence length="424" mass="46122">MAQYIKQGKSESELKDSHGKVEQTVASLIARIEKEGETAVRELSRQFDNWDPEQFRLSAEEIEKIVRSVPDQVKADICFAQEQIRHFAEQQRASIQDIEVETRPGVFLGHKNIPVNSVGCYIPGGRYPMVASSHMSILTAKVAGVKRVIGCTPPINGEIPAATVTAMHFAGADEIYILGGVQAMTAMAVGTETIEAVDMLVGPGNAFVAEAKRQLFGRVGIDLFAGPTEVLIIADDTADGEMVATDLLGQAEHGPTSPAALITTSKKLAEETVAEIERQLQTLPTADVAKVAWEEHGMIILVDDLAEAVVEADKLAYEHVQVLTENPNYFLDHMTNYGALFLGPETNVAYGDKVIGTNHTLPTKKAAKYTGGLWVGKFLKNCTYQRCTPEASAEIGRIAERLCELEGFIGHKAQASLRVKRYGK</sequence>
<dbReference type="EC" id="1.1.-.-" evidence="2"/>
<dbReference type="EMBL" id="AP006627">
    <property type="protein sequence ID" value="BAD63706.1"/>
    <property type="molecule type" value="Genomic_DNA"/>
</dbReference>
<dbReference type="SMR" id="Q5WIU9"/>
<dbReference type="STRING" id="66692.ABC1168"/>
<dbReference type="KEGG" id="bcl:ABC1168"/>
<dbReference type="eggNOG" id="COG0141">
    <property type="taxonomic scope" value="Bacteria"/>
</dbReference>
<dbReference type="HOGENOM" id="CLU_006732_3_3_9"/>
<dbReference type="OrthoDB" id="9805269at2"/>
<dbReference type="Proteomes" id="UP000001168">
    <property type="component" value="Chromosome"/>
</dbReference>
<dbReference type="GO" id="GO:0005829">
    <property type="term" value="C:cytosol"/>
    <property type="evidence" value="ECO:0007669"/>
    <property type="project" value="TreeGrafter"/>
</dbReference>
<dbReference type="GO" id="GO:0004399">
    <property type="term" value="F:histidinol dehydrogenase activity"/>
    <property type="evidence" value="ECO:0007669"/>
    <property type="project" value="InterPro"/>
</dbReference>
<dbReference type="GO" id="GO:0046872">
    <property type="term" value="F:metal ion binding"/>
    <property type="evidence" value="ECO:0007669"/>
    <property type="project" value="UniProtKB-KW"/>
</dbReference>
<dbReference type="GO" id="GO:0051287">
    <property type="term" value="F:NAD binding"/>
    <property type="evidence" value="ECO:0007669"/>
    <property type="project" value="InterPro"/>
</dbReference>
<dbReference type="GO" id="GO:0000105">
    <property type="term" value="P:L-histidine biosynthetic process"/>
    <property type="evidence" value="ECO:0007669"/>
    <property type="project" value="InterPro"/>
</dbReference>
<dbReference type="CDD" id="cd06572">
    <property type="entry name" value="Histidinol_dh"/>
    <property type="match status" value="1"/>
</dbReference>
<dbReference type="FunFam" id="3.40.50.1980:FF:000001">
    <property type="entry name" value="Histidinol dehydrogenase"/>
    <property type="match status" value="1"/>
</dbReference>
<dbReference type="FunFam" id="3.40.50.1980:FF:000026">
    <property type="entry name" value="Histidinol dehydrogenase"/>
    <property type="match status" value="1"/>
</dbReference>
<dbReference type="Gene3D" id="1.20.5.1300">
    <property type="match status" value="1"/>
</dbReference>
<dbReference type="Gene3D" id="3.40.50.1980">
    <property type="entry name" value="Nitrogenase molybdenum iron protein domain"/>
    <property type="match status" value="2"/>
</dbReference>
<dbReference type="InterPro" id="IPR016161">
    <property type="entry name" value="Ald_DH/histidinol_DH"/>
</dbReference>
<dbReference type="InterPro" id="IPR001692">
    <property type="entry name" value="Histidinol_DH_CS"/>
</dbReference>
<dbReference type="InterPro" id="IPR022695">
    <property type="entry name" value="Histidinol_DH_monofunct"/>
</dbReference>
<dbReference type="InterPro" id="IPR012131">
    <property type="entry name" value="Hstdl_DH"/>
</dbReference>
<dbReference type="NCBIfam" id="TIGR00069">
    <property type="entry name" value="hisD"/>
    <property type="match status" value="1"/>
</dbReference>
<dbReference type="PANTHER" id="PTHR21256:SF14">
    <property type="entry name" value="HISTIDINOL DEHYDROGENASE"/>
    <property type="match status" value="1"/>
</dbReference>
<dbReference type="PANTHER" id="PTHR21256">
    <property type="entry name" value="HISTIDINOL DEHYDROGENASE HDH"/>
    <property type="match status" value="1"/>
</dbReference>
<dbReference type="Pfam" id="PF00815">
    <property type="entry name" value="Histidinol_dh"/>
    <property type="match status" value="1"/>
</dbReference>
<dbReference type="PIRSF" id="PIRSF000099">
    <property type="entry name" value="Histidinol_dh"/>
    <property type="match status" value="1"/>
</dbReference>
<dbReference type="PRINTS" id="PR00083">
    <property type="entry name" value="HOLDHDRGNASE"/>
</dbReference>
<dbReference type="SUPFAM" id="SSF53720">
    <property type="entry name" value="ALDH-like"/>
    <property type="match status" value="1"/>
</dbReference>
<dbReference type="PROSITE" id="PS00611">
    <property type="entry name" value="HISOL_DEHYDROGENASE"/>
    <property type="match status" value="1"/>
</dbReference>
<comment type="cofactor">
    <cofactor evidence="1">
        <name>Zn(2+)</name>
        <dbReference type="ChEBI" id="CHEBI:29105"/>
    </cofactor>
    <text evidence="1">Binds 1 zinc ion per subunit.</text>
</comment>
<comment type="similarity">
    <text evidence="2">Belongs to the histidinol dehydrogenase family.</text>
</comment>
<accession>Q5WIU9</accession>
<proteinExistence type="inferred from homology"/>
<gene>
    <name type="ordered locus">ABC1168</name>
</gene>
<name>HISXH_SHOC1</name>
<feature type="chain" id="PRO_0000135724" description="Histidinol dehydrogenase homolog">
    <location>
        <begin position="1"/>
        <end position="424"/>
    </location>
</feature>
<feature type="active site" description="Proton acceptor" evidence="1">
    <location>
        <position position="318"/>
    </location>
</feature>
<feature type="active site" description="Proton acceptor" evidence="1">
    <location>
        <position position="319"/>
    </location>
</feature>
<feature type="binding site" evidence="1">
    <location>
        <position position="250"/>
    </location>
    <ligand>
        <name>Zn(2+)</name>
        <dbReference type="ChEBI" id="CHEBI:29105"/>
    </ligand>
</feature>
<feature type="binding site" evidence="1">
    <location>
        <position position="253"/>
    </location>
    <ligand>
        <name>Zn(2+)</name>
        <dbReference type="ChEBI" id="CHEBI:29105"/>
    </ligand>
</feature>
<feature type="binding site" evidence="1">
    <location>
        <position position="352"/>
    </location>
    <ligand>
        <name>Zn(2+)</name>
        <dbReference type="ChEBI" id="CHEBI:29105"/>
    </ligand>
</feature>
<feature type="binding site" evidence="1">
    <location>
        <position position="411"/>
    </location>
    <ligand>
        <name>Zn(2+)</name>
        <dbReference type="ChEBI" id="CHEBI:29105"/>
    </ligand>
</feature>
<keyword id="KW-0479">Metal-binding</keyword>
<keyword id="KW-0560">Oxidoreductase</keyword>
<keyword id="KW-1185">Reference proteome</keyword>
<keyword id="KW-0862">Zinc</keyword>